<reference key="1">
    <citation type="journal article" date="1999" name="Nature">
        <title>Sequence and analysis of chromosome 2 of the plant Arabidopsis thaliana.</title>
        <authorList>
            <person name="Lin X."/>
            <person name="Kaul S."/>
            <person name="Rounsley S.D."/>
            <person name="Shea T.P."/>
            <person name="Benito M.-I."/>
            <person name="Town C.D."/>
            <person name="Fujii C.Y."/>
            <person name="Mason T.M."/>
            <person name="Bowman C.L."/>
            <person name="Barnstead M.E."/>
            <person name="Feldblyum T.V."/>
            <person name="Buell C.R."/>
            <person name="Ketchum K.A."/>
            <person name="Lee J.J."/>
            <person name="Ronning C.M."/>
            <person name="Koo H.L."/>
            <person name="Moffat K.S."/>
            <person name="Cronin L.A."/>
            <person name="Shen M."/>
            <person name="Pai G."/>
            <person name="Van Aken S."/>
            <person name="Umayam L."/>
            <person name="Tallon L.J."/>
            <person name="Gill J.E."/>
            <person name="Adams M.D."/>
            <person name="Carrera A.J."/>
            <person name="Creasy T.H."/>
            <person name="Goodman H.M."/>
            <person name="Somerville C.R."/>
            <person name="Copenhaver G.P."/>
            <person name="Preuss D."/>
            <person name="Nierman W.C."/>
            <person name="White O."/>
            <person name="Eisen J.A."/>
            <person name="Salzberg S.L."/>
            <person name="Fraser C.M."/>
            <person name="Venter J.C."/>
        </authorList>
    </citation>
    <scope>NUCLEOTIDE SEQUENCE [LARGE SCALE GENOMIC DNA]</scope>
    <source>
        <strain>cv. Columbia</strain>
    </source>
</reference>
<reference key="2">
    <citation type="journal article" date="2017" name="Plant J.">
        <title>Araport11: a complete reannotation of the Arabidopsis thaliana reference genome.</title>
        <authorList>
            <person name="Cheng C.Y."/>
            <person name="Krishnakumar V."/>
            <person name="Chan A.P."/>
            <person name="Thibaud-Nissen F."/>
            <person name="Schobel S."/>
            <person name="Town C.D."/>
        </authorList>
    </citation>
    <scope>GENOME REANNOTATION</scope>
    <source>
        <strain>cv. Columbia</strain>
    </source>
</reference>
<reference key="3">
    <citation type="journal article" date="2002" name="Genome Biol.">
        <title>Evaluation and classification of RING-finger domains encoded by the Arabidopsis genome.</title>
        <authorList>
            <person name="Kosarev P."/>
            <person name="Mayer K.F.X."/>
            <person name="Hardtke C.S."/>
        </authorList>
    </citation>
    <scope>GENE FAMILY ORGANIZATION</scope>
</reference>
<reference key="4">
    <citation type="journal article" date="2002" name="Mol. Biol. Evol.">
        <title>Comparative genomics of the RBR family, including the Parkinson's disease-related gene parkin and the genes of the ariadne subfamily.</title>
        <authorList>
            <person name="Marin I."/>
            <person name="Ferrus A."/>
        </authorList>
    </citation>
    <scope>GENE FAMILY</scope>
</reference>
<reference key="5">
    <citation type="journal article" date="2014" name="Plant J.">
        <title>The single-subunit RING-type E3 ubiquitin ligase RSL1 targets PYL4 and PYR1 ABA receptors in plasma membrane to modulate abscisic acid signaling.</title>
        <authorList>
            <person name="Bueso E."/>
            <person name="Rodriguez L."/>
            <person name="Lorenzo-Orts L."/>
            <person name="Gonzalez-Guzman M."/>
            <person name="Sayas E."/>
            <person name="Munoz-Bertomeu J."/>
            <person name="Ibanez C."/>
            <person name="Serrano R."/>
            <person name="Rodriguez P.L."/>
        </authorList>
    </citation>
    <scope>FUNCTION</scope>
    <scope>DISRUPTION PHENOTYPE</scope>
    <scope>INTERACTION WITH PYL4 AND PYR1</scope>
    <scope>SUBCELLULAR LOCATION</scope>
    <source>
        <strain>cv. Columbia</strain>
    </source>
</reference>
<reference key="6">
    <citation type="journal article" date="2014" name="Plant Sci.">
        <title>A forward genetic approach in Arabidopsis thaliana identifies a RING-type ubiquitin ligase as a novel determinant of seed longevity.</title>
        <authorList>
            <person name="Bueso E."/>
            <person name="Ibanez C."/>
            <person name="Sayas E."/>
            <person name="Munoz-Bertomeu J."/>
            <person name="Gonzalez-Guzman M."/>
            <person name="Rodriguez P.L."/>
            <person name="Serrano R."/>
        </authorList>
    </citation>
    <scope>FUNCTION</scope>
    <scope>DISRUPTION PHENOTYPE</scope>
    <scope>CATALYTIC ACTIVITY</scope>
    <source>
        <strain>cv. Col-2</strain>
        <strain>cv. Columbia</strain>
    </source>
</reference>
<reference key="7">
    <citation type="journal article" date="2016" name="Plant Cell">
        <title>FYVE1/FREE1 interacts with the PYL4 ABA receptor and mediates its delivery to the vacuolar degradation pathway.</title>
        <authorList>
            <person name="Belda-Palazon B."/>
            <person name="Rodriguez L."/>
            <person name="Fernandez M.A."/>
            <person name="Castillo M.-C."/>
            <person name="Anderson E.M."/>
            <person name="Gao C."/>
            <person name="Gonzalez-Guzman M."/>
            <person name="Peirats-Llobet M."/>
            <person name="Zhao Q."/>
            <person name="De Winne N."/>
            <person name="Gevaert K."/>
            <person name="De Jaeger G."/>
            <person name="Jiang L."/>
            <person name="Leon J."/>
            <person name="Mullen R.T."/>
            <person name="Rodriguez P.L."/>
        </authorList>
    </citation>
    <scope>FUNCTION</scope>
    <scope>SUBCELLULAR LOCATION</scope>
    <source>
        <strain>cv. Columbia</strain>
    </source>
</reference>
<sequence length="398" mass="44554">MEEDDLNPAGKPLYRLYFKGLVTEEKEMLLAGFGVAICGDKDDLLFDLKVSIHDPTITLLEVELIALKSGLNQAVSLGINHISICCDHEYIFELVMGISTPKQESIALLLRDVQGIRKYLTSSIPVMLTQNQSNLAYDFAIEAISSEIIIDIPAQKETCNICLNDDINADQMFSVDKSGHMCCSECVKRHIEVRLLEGSLITCPHYRCNSLLTSVRCGNLLTPKLNKMWEQKTKDELIPVMDRVYCPNPRCSTLMSETELSGLNIGVRRCCVKCGEPFCVKCKVSWHNNLSCDEYKTLHPNPTENDGRLRDLANEKSWRQCSKCKHMIELSSGCISVVCRCGHTFCYQCGADAGDCFHGLGRDDLDLTQCCGSCCCFVFFLVIIAIVVTIILLVRRFS</sequence>
<organism>
    <name type="scientific">Arabidopsis thaliana</name>
    <name type="common">Mouse-ear cress</name>
    <dbReference type="NCBI Taxonomy" id="3702"/>
    <lineage>
        <taxon>Eukaryota</taxon>
        <taxon>Viridiplantae</taxon>
        <taxon>Streptophyta</taxon>
        <taxon>Embryophyta</taxon>
        <taxon>Tracheophyta</taxon>
        <taxon>Spermatophyta</taxon>
        <taxon>Magnoliopsida</taxon>
        <taxon>eudicotyledons</taxon>
        <taxon>Gunneridae</taxon>
        <taxon>Pentapetalae</taxon>
        <taxon>rosids</taxon>
        <taxon>malvids</taxon>
        <taxon>Brassicales</taxon>
        <taxon>Brassicaceae</taxon>
        <taxon>Camelineae</taxon>
        <taxon>Arabidopsis</taxon>
    </lineage>
</organism>
<gene>
    <name evidence="7 8" type="primary">RSL1</name>
    <name evidence="10" type="ordered locus">At2g26130</name>
    <name evidence="11" type="ORF">T19L18.6</name>
</gene>
<evidence type="ECO:0000255" key="1"/>
<evidence type="ECO:0000255" key="2">
    <source>
        <dbReference type="PROSITE-ProRule" id="PRU00175"/>
    </source>
</evidence>
<evidence type="ECO:0000255" key="3">
    <source>
        <dbReference type="PROSITE-ProRule" id="PRU01221"/>
    </source>
</evidence>
<evidence type="ECO:0000269" key="4">
    <source>
    </source>
</evidence>
<evidence type="ECO:0000269" key="5">
    <source>
    </source>
</evidence>
<evidence type="ECO:0000269" key="6">
    <source>
    </source>
</evidence>
<evidence type="ECO:0000303" key="7">
    <source>
    </source>
</evidence>
<evidence type="ECO:0000303" key="8">
    <source>
    </source>
</evidence>
<evidence type="ECO:0000305" key="9"/>
<evidence type="ECO:0000312" key="10">
    <source>
        <dbReference type="Araport" id="AT2G26130"/>
    </source>
</evidence>
<evidence type="ECO:0000312" key="11">
    <source>
        <dbReference type="EMBL" id="AAC31224.1"/>
    </source>
</evidence>
<protein>
    <recommendedName>
        <fullName evidence="8">E3 ubiquitin-protein ligase RSL1</fullName>
        <ecNumber evidence="4">2.3.2.31</ecNumber>
    </recommendedName>
    <alternativeName>
        <fullName evidence="7 8">Protein RING FINGER OF SEED LONGEVITY 1</fullName>
    </alternativeName>
    <alternativeName>
        <fullName evidence="8">RING-type E3 ubiquitin transferase RSL1</fullName>
    </alternativeName>
</protein>
<proteinExistence type="evidence at protein level"/>
<keyword id="KW-0938">Abscisic acid signaling pathway</keyword>
<keyword id="KW-1003">Cell membrane</keyword>
<keyword id="KW-0939">Gibberellin signaling pathway</keyword>
<keyword id="KW-0472">Membrane</keyword>
<keyword id="KW-0479">Metal-binding</keyword>
<keyword id="KW-1185">Reference proteome</keyword>
<keyword id="KW-0677">Repeat</keyword>
<keyword id="KW-0808">Transferase</keyword>
<keyword id="KW-0812">Transmembrane</keyword>
<keyword id="KW-1133">Transmembrane helix</keyword>
<keyword id="KW-0833">Ubl conjugation pathway</keyword>
<keyword id="KW-0926">Vacuole</keyword>
<keyword id="KW-0862">Zinc</keyword>
<keyword id="KW-0863">Zinc-finger</keyword>
<dbReference type="EC" id="2.3.2.31" evidence="4"/>
<dbReference type="EMBL" id="AC004747">
    <property type="protein sequence ID" value="AAC31224.1"/>
    <property type="status" value="ALT_SEQ"/>
    <property type="molecule type" value="Genomic_DNA"/>
</dbReference>
<dbReference type="EMBL" id="CP002685">
    <property type="protein sequence ID" value="AEC07797.1"/>
    <property type="molecule type" value="Genomic_DNA"/>
</dbReference>
<dbReference type="PIR" id="T02611">
    <property type="entry name" value="T02611"/>
</dbReference>
<dbReference type="RefSeq" id="NP_180182.2">
    <property type="nucleotide sequence ID" value="NM_128171.3"/>
</dbReference>
<dbReference type="SMR" id="F4ITM1"/>
<dbReference type="FunCoup" id="F4ITM1">
    <property type="interactions" value="1092"/>
</dbReference>
<dbReference type="STRING" id="3702.F4ITM1"/>
<dbReference type="PaxDb" id="3702-AT2G26130.1"/>
<dbReference type="EnsemblPlants" id="AT2G26130.1">
    <property type="protein sequence ID" value="AT2G26130.1"/>
    <property type="gene ID" value="AT2G26130"/>
</dbReference>
<dbReference type="GeneID" id="817153"/>
<dbReference type="Gramene" id="AT2G26130.1">
    <property type="protein sequence ID" value="AT2G26130.1"/>
    <property type="gene ID" value="AT2G26130"/>
</dbReference>
<dbReference type="KEGG" id="ath:AT2G26130"/>
<dbReference type="Araport" id="AT2G26130"/>
<dbReference type="TAIR" id="AT2G26130">
    <property type="gene designation" value="RSL1"/>
</dbReference>
<dbReference type="eggNOG" id="KOG1812">
    <property type="taxonomic scope" value="Eukaryota"/>
</dbReference>
<dbReference type="HOGENOM" id="CLU_022048_8_0_1"/>
<dbReference type="InParanoid" id="F4ITM1"/>
<dbReference type="OMA" id="HMIELSS"/>
<dbReference type="UniPathway" id="UPA00143"/>
<dbReference type="PRO" id="PR:F4ITM1"/>
<dbReference type="Proteomes" id="UP000006548">
    <property type="component" value="Chromosome 2"/>
</dbReference>
<dbReference type="ExpressionAtlas" id="F4ITM1">
    <property type="expression patterns" value="baseline"/>
</dbReference>
<dbReference type="GO" id="GO:0009705">
    <property type="term" value="C:plant-type vacuole membrane"/>
    <property type="evidence" value="ECO:0000314"/>
    <property type="project" value="UniProtKB"/>
</dbReference>
<dbReference type="GO" id="GO:0005886">
    <property type="term" value="C:plasma membrane"/>
    <property type="evidence" value="ECO:0000314"/>
    <property type="project" value="UniProtKB"/>
</dbReference>
<dbReference type="GO" id="GO:0003676">
    <property type="term" value="F:nucleic acid binding"/>
    <property type="evidence" value="ECO:0007669"/>
    <property type="project" value="InterPro"/>
</dbReference>
<dbReference type="GO" id="GO:0004523">
    <property type="term" value="F:RNA-DNA hybrid ribonuclease activity"/>
    <property type="evidence" value="ECO:0007669"/>
    <property type="project" value="InterPro"/>
</dbReference>
<dbReference type="GO" id="GO:0061630">
    <property type="term" value="F:ubiquitin protein ligase activity"/>
    <property type="evidence" value="ECO:0000314"/>
    <property type="project" value="TAIR"/>
</dbReference>
<dbReference type="GO" id="GO:0008270">
    <property type="term" value="F:zinc ion binding"/>
    <property type="evidence" value="ECO:0007669"/>
    <property type="project" value="UniProtKB-KW"/>
</dbReference>
<dbReference type="GO" id="GO:0009738">
    <property type="term" value="P:abscisic acid-activated signaling pathway"/>
    <property type="evidence" value="ECO:0007669"/>
    <property type="project" value="UniProtKB-KW"/>
</dbReference>
<dbReference type="GO" id="GO:0140547">
    <property type="term" value="P:acquisition of seed longevity"/>
    <property type="evidence" value="ECO:0000315"/>
    <property type="project" value="UniProtKB"/>
</dbReference>
<dbReference type="GO" id="GO:0009740">
    <property type="term" value="P:gibberellic acid mediated signaling pathway"/>
    <property type="evidence" value="ECO:0007669"/>
    <property type="project" value="UniProtKB-KW"/>
</dbReference>
<dbReference type="GO" id="GO:0010476">
    <property type="term" value="P:gibberellin mediated signaling pathway"/>
    <property type="evidence" value="ECO:0000315"/>
    <property type="project" value="UniProtKB"/>
</dbReference>
<dbReference type="GO" id="GO:0009788">
    <property type="term" value="P:negative regulation of abscisic acid-activated signaling pathway"/>
    <property type="evidence" value="ECO:0000315"/>
    <property type="project" value="UniProtKB"/>
</dbReference>
<dbReference type="GO" id="GO:0000209">
    <property type="term" value="P:protein polyubiquitination"/>
    <property type="evidence" value="ECO:0000314"/>
    <property type="project" value="UniProtKB"/>
</dbReference>
<dbReference type="GO" id="GO:0010431">
    <property type="term" value="P:seed maturation"/>
    <property type="evidence" value="ECO:0000315"/>
    <property type="project" value="TAIR"/>
</dbReference>
<dbReference type="GO" id="GO:0006511">
    <property type="term" value="P:ubiquitin-dependent protein catabolic process"/>
    <property type="evidence" value="ECO:0000314"/>
    <property type="project" value="UniProtKB"/>
</dbReference>
<dbReference type="CDD" id="cd22582">
    <property type="entry name" value="BRcat_RBR_unk"/>
    <property type="match status" value="1"/>
</dbReference>
<dbReference type="CDD" id="cd22584">
    <property type="entry name" value="Rcat_RBR_unk"/>
    <property type="match status" value="1"/>
</dbReference>
<dbReference type="FunFam" id="3.30.40.10:FF:000230">
    <property type="entry name" value="RBR-type E3 ubiquitin transferase"/>
    <property type="match status" value="1"/>
</dbReference>
<dbReference type="FunFam" id="3.30.420.10:FF:000076">
    <property type="entry name" value="RBR-type E3 ubiquitin transferase"/>
    <property type="match status" value="1"/>
</dbReference>
<dbReference type="Gene3D" id="1.20.120.1750">
    <property type="match status" value="1"/>
</dbReference>
<dbReference type="Gene3D" id="3.30.420.10">
    <property type="entry name" value="Ribonuclease H-like superfamily/Ribonuclease H"/>
    <property type="match status" value="1"/>
</dbReference>
<dbReference type="Gene3D" id="3.30.40.10">
    <property type="entry name" value="Zinc/RING finger domain, C3HC4 (zinc finger)"/>
    <property type="match status" value="1"/>
</dbReference>
<dbReference type="InterPro" id="IPR031127">
    <property type="entry name" value="E3_UB_ligase_RBR"/>
</dbReference>
<dbReference type="InterPro" id="IPR002867">
    <property type="entry name" value="IBR_dom"/>
</dbReference>
<dbReference type="InterPro" id="IPR002156">
    <property type="entry name" value="RNaseH_domain"/>
</dbReference>
<dbReference type="InterPro" id="IPR036397">
    <property type="entry name" value="RNaseH_sf"/>
</dbReference>
<dbReference type="InterPro" id="IPR044066">
    <property type="entry name" value="TRIAD_supradom"/>
</dbReference>
<dbReference type="InterPro" id="IPR013083">
    <property type="entry name" value="Znf_RING/FYVE/PHD"/>
</dbReference>
<dbReference type="PANTHER" id="PTHR11685">
    <property type="entry name" value="RBR FAMILY RING FINGER AND IBR DOMAIN-CONTAINING"/>
    <property type="match status" value="1"/>
</dbReference>
<dbReference type="Pfam" id="PF01485">
    <property type="entry name" value="IBR"/>
    <property type="match status" value="2"/>
</dbReference>
<dbReference type="Pfam" id="PF13456">
    <property type="entry name" value="RVT_3"/>
    <property type="match status" value="1"/>
</dbReference>
<dbReference type="SMART" id="SM00647">
    <property type="entry name" value="IBR"/>
    <property type="match status" value="2"/>
</dbReference>
<dbReference type="SUPFAM" id="SSF57850">
    <property type="entry name" value="RING/U-box"/>
    <property type="match status" value="3"/>
</dbReference>
<dbReference type="PROSITE" id="PS51873">
    <property type="entry name" value="TRIAD"/>
    <property type="match status" value="1"/>
</dbReference>
<accession>F4ITM1</accession>
<accession>O80984</accession>
<name>RGSL1_ARATH</name>
<comment type="function">
    <text evidence="4 5 6">Acts as an E3 ubiquitin-protein ligase, or as part of E3 complex, which accepts ubiquitin from specific E2 ubiquitin-conjugating enzymes and then transfers it to substrates (PubMed:24388521). Negative regulator of the abscisic acid (ABA) signaling pathway which targets PYL4 and PYR1 ABA receptors in plasma membrane to promote their FREE1/FYVE1-dependent trafficking and degradation upon ubiquitynation; this process involves clathrin-mediated endocytosis and trafficking through the ESCRT pathway (PubMed:25330042, PubMed:27495812). Involved in the maintenance of seed longevity (PubMed:24388521). May enhance gibberellins responses (PubMed:24388521).</text>
</comment>
<comment type="catalytic activity">
    <reaction evidence="4">
        <text>[E2 ubiquitin-conjugating enzyme]-S-ubiquitinyl-L-cysteine + [acceptor protein]-L-lysine = [E2 ubiquitin-conjugating enzyme]-L-cysteine + [acceptor protein]-N(6)-ubiquitinyl-L-lysine.</text>
        <dbReference type="EC" id="2.3.2.31"/>
    </reaction>
</comment>
<comment type="cofactor">
    <cofactor evidence="9">
        <name>Zn(2+)</name>
        <dbReference type="ChEBI" id="CHEBI:29105"/>
    </cofactor>
    <text evidence="9">Binds 4 Zn(2+) ions per subunit.</text>
</comment>
<comment type="pathway">
    <text evidence="9">Protein modification; protein ubiquitination.</text>
</comment>
<comment type="subunit">
    <text evidence="5">Interacts with the PYL4 and PYR1 ABA receptors at the plasma membrane.</text>
</comment>
<comment type="subcellular location">
    <subcellularLocation>
        <location evidence="5">Cell membrane</location>
        <topology evidence="1">Single-pass membrane protein</topology>
    </subcellularLocation>
    <subcellularLocation>
        <location evidence="6">Vacuole membrane</location>
        <topology evidence="1">Single-pass membrane protein</topology>
    </subcellularLocation>
    <text evidence="6">Localized transiently in the vacuole when in complex with PYL4 and PYR1.</text>
</comment>
<comment type="domain">
    <text evidence="9">The RING-type zinc finger domains mediate binding to an E2 ubiquitin-conjugating enzyme.</text>
</comment>
<comment type="disruption phenotype">
    <text evidence="4 5">Enhanced sensitivity to abscisic acid (ABA) (PubMed:25330042). Decreased seed longevity (PubMed:24388521).</text>
</comment>
<comment type="similarity">
    <text evidence="9">Belongs to the RBR family.</text>
</comment>
<comment type="sequence caution" evidence="9">
    <conflict type="erroneous gene model prediction">
        <sequence resource="EMBL-CDS" id="AAC31224"/>
    </conflict>
</comment>
<feature type="chain" id="PRO_0000453287" description="E3 ubiquitin-protein ligase RSL1">
    <location>
        <begin position="1"/>
        <end position="398"/>
    </location>
</feature>
<feature type="transmembrane region" description="Helical" evidence="1">
    <location>
        <begin position="374"/>
        <end position="394"/>
    </location>
</feature>
<feature type="zinc finger region" description="RING-type 1" evidence="3">
    <location>
        <begin position="159"/>
        <end position="208"/>
    </location>
</feature>
<feature type="zinc finger region" description="RING-type 3; degenerate" evidence="2">
    <location>
        <begin position="159"/>
        <end position="207"/>
    </location>
</feature>
<feature type="zinc finger region" description="IBR-type" evidence="3">
    <location>
        <begin position="233"/>
        <end position="292"/>
    </location>
</feature>
<feature type="zinc finger region" description="RING-type 4; degenerate" evidence="2">
    <location>
        <begin position="321"/>
        <end position="356"/>
    </location>
</feature>
<feature type="zinc finger region" description="RING-type 2; atypical" evidence="3">
    <location>
        <begin position="321"/>
        <end position="349"/>
    </location>
</feature>
<feature type="region of interest" description="TRIAD supradomain" evidence="3">
    <location>
        <begin position="155"/>
        <end position="374"/>
    </location>
</feature>
<feature type="active site" evidence="3">
    <location>
        <position position="334"/>
    </location>
</feature>
<feature type="binding site" evidence="3">
    <location>
        <position position="159"/>
    </location>
    <ligand>
        <name>Zn(2+)</name>
        <dbReference type="ChEBI" id="CHEBI:29105"/>
        <label>1</label>
    </ligand>
</feature>
<feature type="binding site" evidence="3">
    <location>
        <position position="162"/>
    </location>
    <ligand>
        <name>Zn(2+)</name>
        <dbReference type="ChEBI" id="CHEBI:29105"/>
        <label>1</label>
    </ligand>
</feature>
<feature type="binding site" evidence="3">
    <location>
        <position position="183"/>
    </location>
    <ligand>
        <name>Zn(2+)</name>
        <dbReference type="ChEBI" id="CHEBI:29105"/>
        <label>1</label>
    </ligand>
</feature>
<feature type="binding site" evidence="3">
    <location>
        <position position="186"/>
    </location>
    <ligand>
        <name>Zn(2+)</name>
        <dbReference type="ChEBI" id="CHEBI:29105"/>
        <label>1</label>
    </ligand>
</feature>
<feature type="binding site" evidence="3">
    <location>
        <position position="246"/>
    </location>
    <ligand>
        <name>Zn(2+)</name>
        <dbReference type="ChEBI" id="CHEBI:29105"/>
        <label>2</label>
    </ligand>
</feature>
<feature type="binding site" evidence="3">
    <location>
        <position position="251"/>
    </location>
    <ligand>
        <name>Zn(2+)</name>
        <dbReference type="ChEBI" id="CHEBI:29105"/>
        <label>2</label>
    </ligand>
</feature>
<feature type="binding site" evidence="3">
    <location>
        <position position="271"/>
    </location>
    <ligand>
        <name>Zn(2+)</name>
        <dbReference type="ChEBI" id="CHEBI:29105"/>
        <label>2</label>
    </ligand>
</feature>
<feature type="binding site" evidence="3">
    <location>
        <position position="274"/>
    </location>
    <ligand>
        <name>Zn(2+)</name>
        <dbReference type="ChEBI" id="CHEBI:29105"/>
        <label>2</label>
    </ligand>
</feature>
<feature type="binding site" evidence="3">
    <location>
        <position position="279"/>
    </location>
    <ligand>
        <name>Zn(2+)</name>
        <dbReference type="ChEBI" id="CHEBI:29105"/>
        <label>3</label>
    </ligand>
</feature>
<feature type="binding site" evidence="3">
    <location>
        <position position="282"/>
    </location>
    <ligand>
        <name>Zn(2+)</name>
        <dbReference type="ChEBI" id="CHEBI:29105"/>
        <label>3</label>
    </ligand>
</feature>
<feature type="binding site" evidence="3">
    <location>
        <position position="287"/>
    </location>
    <ligand>
        <name>Zn(2+)</name>
        <dbReference type="ChEBI" id="CHEBI:29105"/>
        <label>3</label>
    </ligand>
</feature>
<feature type="binding site" evidence="3">
    <location>
        <position position="292"/>
    </location>
    <ligand>
        <name>Zn(2+)</name>
        <dbReference type="ChEBI" id="CHEBI:29105"/>
        <label>3</label>
    </ligand>
</feature>
<feature type="binding site" evidence="3">
    <location>
        <position position="321"/>
    </location>
    <ligand>
        <name>Zn(2+)</name>
        <dbReference type="ChEBI" id="CHEBI:29105"/>
        <label>4</label>
    </ligand>
</feature>
<feature type="binding site" evidence="3">
    <location>
        <position position="324"/>
    </location>
    <ligand>
        <name>Zn(2+)</name>
        <dbReference type="ChEBI" id="CHEBI:29105"/>
        <label>4</label>
    </ligand>
</feature>
<feature type="binding site" evidence="3">
    <location>
        <position position="339"/>
    </location>
    <ligand>
        <name>Zn(2+)</name>
        <dbReference type="ChEBI" id="CHEBI:29105"/>
        <label>4</label>
    </ligand>
</feature>
<feature type="binding site" evidence="3">
    <location>
        <position position="341"/>
    </location>
    <ligand>
        <name>Zn(2+)</name>
        <dbReference type="ChEBI" id="CHEBI:29105"/>
        <label>4</label>
    </ligand>
</feature>
<feature type="binding site" evidence="3">
    <location>
        <position position="346"/>
    </location>
    <ligand>
        <name>Zn(2+)</name>
        <dbReference type="ChEBI" id="CHEBI:29105"/>
        <label>5</label>
    </ligand>
</feature>
<feature type="binding site" evidence="3">
    <location>
        <position position="349"/>
    </location>
    <ligand>
        <name>Zn(2+)</name>
        <dbReference type="ChEBI" id="CHEBI:29105"/>
        <label>5</label>
    </ligand>
</feature>
<feature type="binding site" evidence="3">
    <location>
        <position position="358"/>
    </location>
    <ligand>
        <name>Zn(2+)</name>
        <dbReference type="ChEBI" id="CHEBI:29105"/>
        <label>5</label>
    </ligand>
</feature>
<feature type="binding site" evidence="3">
    <location>
        <position position="370"/>
    </location>
    <ligand>
        <name>Zn(2+)</name>
        <dbReference type="ChEBI" id="CHEBI:29105"/>
        <label>5</label>
    </ligand>
</feature>